<organism>
    <name type="scientific">Xanthomonas oryzae pv. oryzae (strain PXO99A)</name>
    <dbReference type="NCBI Taxonomy" id="360094"/>
    <lineage>
        <taxon>Bacteria</taxon>
        <taxon>Pseudomonadati</taxon>
        <taxon>Pseudomonadota</taxon>
        <taxon>Gammaproteobacteria</taxon>
        <taxon>Lysobacterales</taxon>
        <taxon>Lysobacteraceae</taxon>
        <taxon>Xanthomonas</taxon>
    </lineage>
</organism>
<feature type="chain" id="PRO_1000139075" description="Acyl carrier protein">
    <location>
        <begin position="1"/>
        <end position="79"/>
    </location>
</feature>
<feature type="domain" description="Carrier" evidence="2">
    <location>
        <begin position="2"/>
        <end position="77"/>
    </location>
</feature>
<feature type="modified residue" description="O-(pantetheine 4'-phosphoryl)serine" evidence="2">
    <location>
        <position position="37"/>
    </location>
</feature>
<comment type="function">
    <text evidence="1">Carrier of the growing fatty acid chain in fatty acid biosynthesis.</text>
</comment>
<comment type="pathway">
    <text evidence="1">Lipid metabolism; fatty acid biosynthesis.</text>
</comment>
<comment type="subcellular location">
    <subcellularLocation>
        <location evidence="1">Cytoplasm</location>
    </subcellularLocation>
</comment>
<comment type="PTM">
    <text evidence="1">4'-phosphopantetheine is transferred from CoA to a specific serine of apo-ACP by AcpS. This modification is essential for activity because fatty acids are bound in thioester linkage to the sulfhydryl of the prosthetic group.</text>
</comment>
<comment type="similarity">
    <text evidence="1">Belongs to the acyl carrier protein (ACP) family.</text>
</comment>
<dbReference type="EMBL" id="CP000967">
    <property type="protein sequence ID" value="ACD60956.1"/>
    <property type="molecule type" value="Genomic_DNA"/>
</dbReference>
<dbReference type="RefSeq" id="WP_010368407.1">
    <property type="nucleotide sequence ID" value="NC_010717.2"/>
</dbReference>
<dbReference type="SMR" id="B2SNN4"/>
<dbReference type="GeneID" id="97210659"/>
<dbReference type="KEGG" id="xop:PXO_02710"/>
<dbReference type="eggNOG" id="COG0236">
    <property type="taxonomic scope" value="Bacteria"/>
</dbReference>
<dbReference type="HOGENOM" id="CLU_108696_5_1_6"/>
<dbReference type="UniPathway" id="UPA00094"/>
<dbReference type="Proteomes" id="UP000001740">
    <property type="component" value="Chromosome"/>
</dbReference>
<dbReference type="GO" id="GO:0005829">
    <property type="term" value="C:cytosol"/>
    <property type="evidence" value="ECO:0007669"/>
    <property type="project" value="TreeGrafter"/>
</dbReference>
<dbReference type="GO" id="GO:0016020">
    <property type="term" value="C:membrane"/>
    <property type="evidence" value="ECO:0007669"/>
    <property type="project" value="GOC"/>
</dbReference>
<dbReference type="GO" id="GO:0000035">
    <property type="term" value="F:acyl binding"/>
    <property type="evidence" value="ECO:0007669"/>
    <property type="project" value="TreeGrafter"/>
</dbReference>
<dbReference type="GO" id="GO:0000036">
    <property type="term" value="F:acyl carrier activity"/>
    <property type="evidence" value="ECO:0007669"/>
    <property type="project" value="UniProtKB-UniRule"/>
</dbReference>
<dbReference type="GO" id="GO:0009245">
    <property type="term" value="P:lipid A biosynthetic process"/>
    <property type="evidence" value="ECO:0007669"/>
    <property type="project" value="TreeGrafter"/>
</dbReference>
<dbReference type="FunFam" id="1.10.1200.10:FF:000001">
    <property type="entry name" value="Acyl carrier protein"/>
    <property type="match status" value="1"/>
</dbReference>
<dbReference type="Gene3D" id="1.10.1200.10">
    <property type="entry name" value="ACP-like"/>
    <property type="match status" value="1"/>
</dbReference>
<dbReference type="HAMAP" id="MF_01217">
    <property type="entry name" value="Acyl_carrier"/>
    <property type="match status" value="1"/>
</dbReference>
<dbReference type="InterPro" id="IPR003231">
    <property type="entry name" value="ACP"/>
</dbReference>
<dbReference type="InterPro" id="IPR036736">
    <property type="entry name" value="ACP-like_sf"/>
</dbReference>
<dbReference type="InterPro" id="IPR009081">
    <property type="entry name" value="PP-bd_ACP"/>
</dbReference>
<dbReference type="InterPro" id="IPR006162">
    <property type="entry name" value="Ppantetheine_attach_site"/>
</dbReference>
<dbReference type="NCBIfam" id="TIGR00517">
    <property type="entry name" value="acyl_carrier"/>
    <property type="match status" value="1"/>
</dbReference>
<dbReference type="NCBIfam" id="NF002148">
    <property type="entry name" value="PRK00982.1-2"/>
    <property type="match status" value="1"/>
</dbReference>
<dbReference type="NCBIfam" id="NF002149">
    <property type="entry name" value="PRK00982.1-3"/>
    <property type="match status" value="1"/>
</dbReference>
<dbReference type="NCBIfam" id="NF002150">
    <property type="entry name" value="PRK00982.1-4"/>
    <property type="match status" value="1"/>
</dbReference>
<dbReference type="NCBIfam" id="NF002151">
    <property type="entry name" value="PRK00982.1-5"/>
    <property type="match status" value="1"/>
</dbReference>
<dbReference type="PANTHER" id="PTHR20863">
    <property type="entry name" value="ACYL CARRIER PROTEIN"/>
    <property type="match status" value="1"/>
</dbReference>
<dbReference type="PANTHER" id="PTHR20863:SF76">
    <property type="entry name" value="CARRIER DOMAIN-CONTAINING PROTEIN"/>
    <property type="match status" value="1"/>
</dbReference>
<dbReference type="Pfam" id="PF00550">
    <property type="entry name" value="PP-binding"/>
    <property type="match status" value="1"/>
</dbReference>
<dbReference type="SUPFAM" id="SSF47336">
    <property type="entry name" value="ACP-like"/>
    <property type="match status" value="1"/>
</dbReference>
<dbReference type="PROSITE" id="PS50075">
    <property type="entry name" value="CARRIER"/>
    <property type="match status" value="1"/>
</dbReference>
<dbReference type="PROSITE" id="PS00012">
    <property type="entry name" value="PHOSPHOPANTETHEINE"/>
    <property type="match status" value="1"/>
</dbReference>
<evidence type="ECO:0000255" key="1">
    <source>
        <dbReference type="HAMAP-Rule" id="MF_01217"/>
    </source>
</evidence>
<evidence type="ECO:0000255" key="2">
    <source>
        <dbReference type="PROSITE-ProRule" id="PRU00258"/>
    </source>
</evidence>
<keyword id="KW-0963">Cytoplasm</keyword>
<keyword id="KW-0275">Fatty acid biosynthesis</keyword>
<keyword id="KW-0276">Fatty acid metabolism</keyword>
<keyword id="KW-0444">Lipid biosynthesis</keyword>
<keyword id="KW-0443">Lipid metabolism</keyword>
<keyword id="KW-0596">Phosphopantetheine</keyword>
<keyword id="KW-0597">Phosphoprotein</keyword>
<gene>
    <name evidence="1" type="primary">acpP</name>
    <name type="ordered locus">PXO_02710</name>
</gene>
<reference key="1">
    <citation type="journal article" date="2008" name="BMC Genomics">
        <title>Genome sequence and rapid evolution of the rice pathogen Xanthomonas oryzae pv. oryzae PXO99A.</title>
        <authorList>
            <person name="Salzberg S.L."/>
            <person name="Sommer D.D."/>
            <person name="Schatz M.C."/>
            <person name="Phillippy A.M."/>
            <person name="Rabinowicz P.D."/>
            <person name="Tsuge S."/>
            <person name="Furutani A."/>
            <person name="Ochiai H."/>
            <person name="Delcher A.L."/>
            <person name="Kelley D."/>
            <person name="Madupu R."/>
            <person name="Puiu D."/>
            <person name="Radune D."/>
            <person name="Shumway M."/>
            <person name="Trapnell C."/>
            <person name="Aparna G."/>
            <person name="Jha G."/>
            <person name="Pandey A."/>
            <person name="Patil P.B."/>
            <person name="Ishihara H."/>
            <person name="Meyer D.F."/>
            <person name="Szurek B."/>
            <person name="Verdier V."/>
            <person name="Koebnik R."/>
            <person name="Dow J.M."/>
            <person name="Ryan R.P."/>
            <person name="Hirata H."/>
            <person name="Tsuyumu S."/>
            <person name="Won Lee S."/>
            <person name="Seo Y.-S."/>
            <person name="Sriariyanum M."/>
            <person name="Ronald P.C."/>
            <person name="Sonti R.V."/>
            <person name="Van Sluys M.-A."/>
            <person name="Leach J.E."/>
            <person name="White F.F."/>
            <person name="Bogdanove A.J."/>
        </authorList>
    </citation>
    <scope>NUCLEOTIDE SEQUENCE [LARGE SCALE GENOMIC DNA]</scope>
    <source>
        <strain>PXO99A</strain>
    </source>
</reference>
<name>ACP_XANOP</name>
<sequence>MSTIEERVKKIVVEQLGVKEEEVTTSASFVDDLGADSLDTVELVMALEEEFECEIPDEEAEKITSVQQAIDYVKSHVKS</sequence>
<accession>B2SNN4</accession>
<proteinExistence type="inferred from homology"/>
<protein>
    <recommendedName>
        <fullName evidence="1">Acyl carrier protein</fullName>
        <shortName evidence="1">ACP</shortName>
    </recommendedName>
</protein>